<gene>
    <name evidence="1" type="primary">cpfC</name>
    <name type="ordered locus">LSEI_1991</name>
</gene>
<organism>
    <name type="scientific">Lacticaseibacillus paracasei (strain ATCC 334 / BCRC 17002 / CCUG 31169 / CIP 107868 / KCTC 3260 / NRRL B-441)</name>
    <name type="common">Lactobacillus paracasei</name>
    <dbReference type="NCBI Taxonomy" id="321967"/>
    <lineage>
        <taxon>Bacteria</taxon>
        <taxon>Bacillati</taxon>
        <taxon>Bacillota</taxon>
        <taxon>Bacilli</taxon>
        <taxon>Lactobacillales</taxon>
        <taxon>Lactobacillaceae</taxon>
        <taxon>Lacticaseibacillus</taxon>
    </lineage>
</organism>
<evidence type="ECO:0000255" key="1">
    <source>
        <dbReference type="HAMAP-Rule" id="MF_00323"/>
    </source>
</evidence>
<dbReference type="EC" id="4.99.1.9" evidence="1"/>
<dbReference type="EMBL" id="CP000423">
    <property type="protein sequence ID" value="ABJ70749.1"/>
    <property type="molecule type" value="Genomic_DNA"/>
</dbReference>
<dbReference type="RefSeq" id="YP_807191.1">
    <property type="nucleotide sequence ID" value="NC_008526.1"/>
</dbReference>
<dbReference type="SMR" id="Q036X3"/>
<dbReference type="STRING" id="321967.LSEI_1991"/>
<dbReference type="PaxDb" id="321967-LSEI_1991"/>
<dbReference type="KEGG" id="lca:LSEI_1991"/>
<dbReference type="PATRIC" id="fig|321967.11.peg.1955"/>
<dbReference type="HOGENOM" id="CLU_018884_0_0_9"/>
<dbReference type="UniPathway" id="UPA00252"/>
<dbReference type="Proteomes" id="UP000001651">
    <property type="component" value="Chromosome"/>
</dbReference>
<dbReference type="GO" id="GO:0005737">
    <property type="term" value="C:cytoplasm"/>
    <property type="evidence" value="ECO:0007669"/>
    <property type="project" value="UniProtKB-SubCell"/>
</dbReference>
<dbReference type="GO" id="GO:0004325">
    <property type="term" value="F:ferrochelatase activity"/>
    <property type="evidence" value="ECO:0007669"/>
    <property type="project" value="UniProtKB-UniRule"/>
</dbReference>
<dbReference type="GO" id="GO:0046872">
    <property type="term" value="F:metal ion binding"/>
    <property type="evidence" value="ECO:0007669"/>
    <property type="project" value="UniProtKB-KW"/>
</dbReference>
<dbReference type="GO" id="GO:0006783">
    <property type="term" value="P:heme biosynthetic process"/>
    <property type="evidence" value="ECO:0007669"/>
    <property type="project" value="UniProtKB-UniRule"/>
</dbReference>
<dbReference type="CDD" id="cd00419">
    <property type="entry name" value="Ferrochelatase_C"/>
    <property type="match status" value="1"/>
</dbReference>
<dbReference type="CDD" id="cd03411">
    <property type="entry name" value="Ferrochelatase_N"/>
    <property type="match status" value="1"/>
</dbReference>
<dbReference type="Gene3D" id="3.40.50.1400">
    <property type="match status" value="2"/>
</dbReference>
<dbReference type="HAMAP" id="MF_00323">
    <property type="entry name" value="Ferrochelatase"/>
    <property type="match status" value="1"/>
</dbReference>
<dbReference type="InterPro" id="IPR001015">
    <property type="entry name" value="Ferrochelatase"/>
</dbReference>
<dbReference type="InterPro" id="IPR019772">
    <property type="entry name" value="Ferrochelatase_AS"/>
</dbReference>
<dbReference type="InterPro" id="IPR033644">
    <property type="entry name" value="Ferrochelatase_C"/>
</dbReference>
<dbReference type="InterPro" id="IPR033659">
    <property type="entry name" value="Ferrochelatase_N"/>
</dbReference>
<dbReference type="NCBIfam" id="TIGR00109">
    <property type="entry name" value="hemH"/>
    <property type="match status" value="1"/>
</dbReference>
<dbReference type="PANTHER" id="PTHR11108">
    <property type="entry name" value="FERROCHELATASE"/>
    <property type="match status" value="1"/>
</dbReference>
<dbReference type="PANTHER" id="PTHR11108:SF1">
    <property type="entry name" value="FERROCHELATASE, MITOCHONDRIAL"/>
    <property type="match status" value="1"/>
</dbReference>
<dbReference type="Pfam" id="PF00762">
    <property type="entry name" value="Ferrochelatase"/>
    <property type="match status" value="1"/>
</dbReference>
<dbReference type="SUPFAM" id="SSF53800">
    <property type="entry name" value="Chelatase"/>
    <property type="match status" value="1"/>
</dbReference>
<dbReference type="PROSITE" id="PS00534">
    <property type="entry name" value="FERROCHELATASE"/>
    <property type="match status" value="1"/>
</dbReference>
<accession>Q036X3</accession>
<feature type="chain" id="PRO_1000019311" description="Coproporphyrin III ferrochelatase">
    <location>
        <begin position="1"/>
        <end position="321"/>
    </location>
</feature>
<feature type="binding site" evidence="1">
    <location>
        <position position="185"/>
    </location>
    <ligand>
        <name>Fe(2+)</name>
        <dbReference type="ChEBI" id="CHEBI:29033"/>
    </ligand>
</feature>
<feature type="binding site" evidence="1">
    <location>
        <position position="267"/>
    </location>
    <ligand>
        <name>Fe(2+)</name>
        <dbReference type="ChEBI" id="CHEBI:29033"/>
    </ligand>
</feature>
<protein>
    <recommendedName>
        <fullName evidence="1">Coproporphyrin III ferrochelatase</fullName>
        <ecNumber evidence="1">4.99.1.9</ecNumber>
    </recommendedName>
</protein>
<comment type="function">
    <text evidence="1">Involved in coproporphyrin-dependent heme b biosynthesis. Catalyzes the insertion of ferrous iron into coproporphyrin III to form Fe-coproporphyrin III.</text>
</comment>
<comment type="catalytic activity">
    <reaction evidence="1">
        <text>Fe-coproporphyrin III + 2 H(+) = coproporphyrin III + Fe(2+)</text>
        <dbReference type="Rhea" id="RHEA:49572"/>
        <dbReference type="ChEBI" id="CHEBI:15378"/>
        <dbReference type="ChEBI" id="CHEBI:29033"/>
        <dbReference type="ChEBI" id="CHEBI:68438"/>
        <dbReference type="ChEBI" id="CHEBI:131725"/>
        <dbReference type="EC" id="4.99.1.9"/>
    </reaction>
    <physiologicalReaction direction="right-to-left" evidence="1">
        <dbReference type="Rhea" id="RHEA:49574"/>
    </physiologicalReaction>
</comment>
<comment type="pathway">
    <text evidence="1">Porphyrin-containing compound metabolism; protoheme biosynthesis.</text>
</comment>
<comment type="subcellular location">
    <subcellularLocation>
        <location evidence="1">Cytoplasm</location>
    </subcellularLocation>
</comment>
<comment type="similarity">
    <text evidence="1">Belongs to the ferrochelatase family.</text>
</comment>
<sequence length="321" mass="36274">MAKGLLIVNLGSPVSPETKDVRRYLREFLSDQNVITMPKALWQPILRGFILPFRSWRSATFYKHEWTQAGSPLIAYTQVTRDRLRERLPDWDVQMAMNYGGEYPIGETLQTMAARGDAPIVVIPLFPEYTQSTTKTILDKVAASGVKTVVIDRFYDHSDYQKILAQQIDDAYEAGAYDTVILSYHGIPTAMVRHGDPYQQECETTTAGVKQYLKKVPQTKVEMCYQSKFGPVPWLKPYLRNRLMELAALGKRNVLVATPSFVADCLETLEENNVQNYQTFRANGGKNFATVRPMNGCEPFCDFLAKLAEDKIAAEANHGKA</sequence>
<reference key="1">
    <citation type="journal article" date="2006" name="Proc. Natl. Acad. Sci. U.S.A.">
        <title>Comparative genomics of the lactic acid bacteria.</title>
        <authorList>
            <person name="Makarova K.S."/>
            <person name="Slesarev A."/>
            <person name="Wolf Y.I."/>
            <person name="Sorokin A."/>
            <person name="Mirkin B."/>
            <person name="Koonin E.V."/>
            <person name="Pavlov A."/>
            <person name="Pavlova N."/>
            <person name="Karamychev V."/>
            <person name="Polouchine N."/>
            <person name="Shakhova V."/>
            <person name="Grigoriev I."/>
            <person name="Lou Y."/>
            <person name="Rohksar D."/>
            <person name="Lucas S."/>
            <person name="Huang K."/>
            <person name="Goodstein D.M."/>
            <person name="Hawkins T."/>
            <person name="Plengvidhya V."/>
            <person name="Welker D."/>
            <person name="Hughes J."/>
            <person name="Goh Y."/>
            <person name="Benson A."/>
            <person name="Baldwin K."/>
            <person name="Lee J.-H."/>
            <person name="Diaz-Muniz I."/>
            <person name="Dosti B."/>
            <person name="Smeianov V."/>
            <person name="Wechter W."/>
            <person name="Barabote R."/>
            <person name="Lorca G."/>
            <person name="Altermann E."/>
            <person name="Barrangou R."/>
            <person name="Ganesan B."/>
            <person name="Xie Y."/>
            <person name="Rawsthorne H."/>
            <person name="Tamir D."/>
            <person name="Parker C."/>
            <person name="Breidt F."/>
            <person name="Broadbent J.R."/>
            <person name="Hutkins R."/>
            <person name="O'Sullivan D."/>
            <person name="Steele J."/>
            <person name="Unlu G."/>
            <person name="Saier M.H. Jr."/>
            <person name="Klaenhammer T."/>
            <person name="Richardson P."/>
            <person name="Kozyavkin S."/>
            <person name="Weimer B.C."/>
            <person name="Mills D.A."/>
        </authorList>
    </citation>
    <scope>NUCLEOTIDE SEQUENCE [LARGE SCALE GENOMIC DNA]</scope>
    <source>
        <strain>ATCC 334 / BCRC 17002 / CCUG 31169 / CIP 107868 / KCTC 3260 / NRRL B-441</strain>
    </source>
</reference>
<keyword id="KW-0963">Cytoplasm</keyword>
<keyword id="KW-0350">Heme biosynthesis</keyword>
<keyword id="KW-0408">Iron</keyword>
<keyword id="KW-0456">Lyase</keyword>
<keyword id="KW-0479">Metal-binding</keyword>
<keyword id="KW-0627">Porphyrin biosynthesis</keyword>
<keyword id="KW-1185">Reference proteome</keyword>
<name>CPFC_LACP3</name>
<proteinExistence type="inferred from homology"/>